<protein>
    <recommendedName>
        <fullName>Bifunctional purine biosynthetic protein ADE1</fullName>
    </recommendedName>
    <domain>
        <recommendedName>
            <fullName>Phosphoribosylamine--glycine ligase</fullName>
            <ecNumber evidence="4">6.3.4.13</ecNumber>
        </recommendedName>
        <alternativeName>
            <fullName>Glycinamide ribonucleotide synthetase</fullName>
            <shortName evidence="6">GAR synthetase</shortName>
            <shortName>GARS</shortName>
        </alternativeName>
        <alternativeName>
            <fullName>Phosphoribosylglycinamide synthetase</fullName>
        </alternativeName>
    </domain>
    <domain>
        <recommendedName>
            <fullName>Phosphoribosylformylglycinamidine cyclo-ligase</fullName>
            <ecNumber evidence="4">6.3.3.1</ecNumber>
        </recommendedName>
        <alternativeName>
            <fullName>AIR synthase</fullName>
            <shortName evidence="6">AIR synthetase</shortName>
            <shortName>AIRS</shortName>
        </alternativeName>
        <alternativeName>
            <fullName>Phosphoribosyl-aminoimidazole synthetase</fullName>
        </alternativeName>
    </domain>
</protein>
<comment type="function">
    <text evidence="4">Catalyzes the second and fifth step in the 'de novo' purine biosynthesis pathway; contains phosphoribosylamine--glycine ligase (GARS) and phosphoribosylformylglycinamidine cyclo-ligase (AIRS) activities.</text>
</comment>
<comment type="catalytic activity">
    <reaction evidence="4">
        <text>5-phospho-beta-D-ribosylamine + glycine + ATP = N(1)-(5-phospho-beta-D-ribosyl)glycinamide + ADP + phosphate + H(+)</text>
        <dbReference type="Rhea" id="RHEA:17453"/>
        <dbReference type="ChEBI" id="CHEBI:15378"/>
        <dbReference type="ChEBI" id="CHEBI:30616"/>
        <dbReference type="ChEBI" id="CHEBI:43474"/>
        <dbReference type="ChEBI" id="CHEBI:57305"/>
        <dbReference type="ChEBI" id="CHEBI:58681"/>
        <dbReference type="ChEBI" id="CHEBI:143788"/>
        <dbReference type="ChEBI" id="CHEBI:456216"/>
        <dbReference type="EC" id="6.3.4.13"/>
    </reaction>
</comment>
<comment type="catalytic activity">
    <reaction evidence="4">
        <text>2-formamido-N(1)-(5-O-phospho-beta-D-ribosyl)acetamidine + ATP = 5-amino-1-(5-phospho-beta-D-ribosyl)imidazole + ADP + phosphate + H(+)</text>
        <dbReference type="Rhea" id="RHEA:23032"/>
        <dbReference type="ChEBI" id="CHEBI:15378"/>
        <dbReference type="ChEBI" id="CHEBI:30616"/>
        <dbReference type="ChEBI" id="CHEBI:43474"/>
        <dbReference type="ChEBI" id="CHEBI:137981"/>
        <dbReference type="ChEBI" id="CHEBI:147287"/>
        <dbReference type="ChEBI" id="CHEBI:456216"/>
        <dbReference type="EC" id="6.3.3.1"/>
    </reaction>
</comment>
<comment type="cofactor">
    <cofactor evidence="2">
        <name>Mg(2+)</name>
        <dbReference type="ChEBI" id="CHEBI:18420"/>
    </cofactor>
    <cofactor evidence="2">
        <name>Mn(2+)</name>
        <dbReference type="ChEBI" id="CHEBI:29035"/>
    </cofactor>
    <text evidence="7">Binds two magnesium or manganese ions per subunit.</text>
</comment>
<comment type="pathway">
    <text evidence="7">Purine metabolism; IMP biosynthesis via de novo pathway; 5-amino-1-(5-phospho-D-ribosyl)imidazole from N(2)-formyl-N(1)-(5-phospho-D-ribosyl)glycinamide: step 2/2.</text>
</comment>
<comment type="pathway">
    <text evidence="7">Purine metabolism; IMP biosynthesis via de novo pathway; N(1)-(5-phospho-D-ribosyl)glycinamide from 5-phospho-alpha-D-ribose 1-diphosphate: step 2/2.</text>
</comment>
<comment type="subcellular location">
    <subcellularLocation>
        <location evidence="3">Cytoplasm</location>
        <location evidence="3">Cytosol</location>
    </subcellularLocation>
</comment>
<comment type="similarity">
    <text evidence="7">In the N-terminal section; belongs to the GARS family.</text>
</comment>
<comment type="similarity">
    <text evidence="7">In the C-terminal section; belongs to the AIR synthase family.</text>
</comment>
<accession>P20772</accession>
<accession>Q9UUM5</accession>
<dbReference type="EC" id="6.3.4.13" evidence="4"/>
<dbReference type="EC" id="6.3.3.1" evidence="4"/>
<dbReference type="EMBL" id="X06601">
    <property type="protein sequence ID" value="CAA29820.1"/>
    <property type="molecule type" value="Genomic_DNA"/>
</dbReference>
<dbReference type="EMBL" id="CU329671">
    <property type="protein sequence ID" value="CAA16823.1"/>
    <property type="molecule type" value="Genomic_DNA"/>
</dbReference>
<dbReference type="PIR" id="S00652">
    <property type="entry name" value="S00652"/>
</dbReference>
<dbReference type="RefSeq" id="NP_596304.1">
    <property type="nucleotide sequence ID" value="NM_001022225.2"/>
</dbReference>
<dbReference type="SMR" id="P20772"/>
<dbReference type="BioGRID" id="277549">
    <property type="interactions" value="4"/>
</dbReference>
<dbReference type="FunCoup" id="P20772">
    <property type="interactions" value="801"/>
</dbReference>
<dbReference type="STRING" id="284812.P20772"/>
<dbReference type="iPTMnet" id="P20772"/>
<dbReference type="PaxDb" id="4896-SPBC405.01.1"/>
<dbReference type="EnsemblFungi" id="SPBC405.01.1">
    <property type="protein sequence ID" value="SPBC405.01.1:pep"/>
    <property type="gene ID" value="SPBC405.01"/>
</dbReference>
<dbReference type="PomBase" id="SPBC405.01">
    <property type="gene designation" value="ade1"/>
</dbReference>
<dbReference type="VEuPathDB" id="FungiDB:SPBC405.01"/>
<dbReference type="eggNOG" id="KOG0237">
    <property type="taxonomic scope" value="Eukaryota"/>
</dbReference>
<dbReference type="HOGENOM" id="CLU_005361_1_0_1"/>
<dbReference type="InParanoid" id="P20772"/>
<dbReference type="OMA" id="EVMQACC"/>
<dbReference type="PhylomeDB" id="P20772"/>
<dbReference type="Reactome" id="R-SPO-73817">
    <property type="pathway name" value="Purine ribonucleoside monophosphate biosynthesis"/>
</dbReference>
<dbReference type="UniPathway" id="UPA00074">
    <property type="reaction ID" value="UER00125"/>
</dbReference>
<dbReference type="UniPathway" id="UPA00074">
    <property type="reaction ID" value="UER00129"/>
</dbReference>
<dbReference type="PRO" id="PR:P20772"/>
<dbReference type="Proteomes" id="UP000002485">
    <property type="component" value="Chromosome II"/>
</dbReference>
<dbReference type="GO" id="GO:0005829">
    <property type="term" value="C:cytosol"/>
    <property type="evidence" value="ECO:0007005"/>
    <property type="project" value="PomBase"/>
</dbReference>
<dbReference type="GO" id="GO:0005524">
    <property type="term" value="F:ATP binding"/>
    <property type="evidence" value="ECO:0007669"/>
    <property type="project" value="UniProtKB-KW"/>
</dbReference>
<dbReference type="GO" id="GO:0046872">
    <property type="term" value="F:metal ion binding"/>
    <property type="evidence" value="ECO:0007669"/>
    <property type="project" value="UniProtKB-KW"/>
</dbReference>
<dbReference type="GO" id="GO:0004637">
    <property type="term" value="F:phosphoribosylamine-glycine ligase activity"/>
    <property type="evidence" value="ECO:0000314"/>
    <property type="project" value="PomBase"/>
</dbReference>
<dbReference type="GO" id="GO:0004641">
    <property type="term" value="F:phosphoribosylformylglycinamidine cyclo-ligase activity"/>
    <property type="evidence" value="ECO:0000314"/>
    <property type="project" value="PomBase"/>
</dbReference>
<dbReference type="GO" id="GO:0006189">
    <property type="term" value="P:'de novo' IMP biosynthetic process"/>
    <property type="evidence" value="ECO:0000315"/>
    <property type="project" value="PomBase"/>
</dbReference>
<dbReference type="GO" id="GO:0046084">
    <property type="term" value="P:adenine biosynthetic process"/>
    <property type="evidence" value="ECO:0000318"/>
    <property type="project" value="GO_Central"/>
</dbReference>
<dbReference type="GO" id="GO:0009113">
    <property type="term" value="P:purine nucleobase biosynthetic process"/>
    <property type="evidence" value="ECO:0000314"/>
    <property type="project" value="PomBase"/>
</dbReference>
<dbReference type="GO" id="GO:0006164">
    <property type="term" value="P:purine nucleotide biosynthetic process"/>
    <property type="evidence" value="ECO:0000318"/>
    <property type="project" value="GO_Central"/>
</dbReference>
<dbReference type="CDD" id="cd02196">
    <property type="entry name" value="PurM"/>
    <property type="match status" value="1"/>
</dbReference>
<dbReference type="FunFam" id="3.40.50.20:FF:000006">
    <property type="entry name" value="Phosphoribosylamine--glycine ligase, chloroplastic"/>
    <property type="match status" value="1"/>
</dbReference>
<dbReference type="FunFam" id="3.30.1490.20:FF:000006">
    <property type="entry name" value="phosphoribosylamine--glycine ligase, chloroplastic-like"/>
    <property type="match status" value="1"/>
</dbReference>
<dbReference type="FunFam" id="3.30.1330.10:FF:000001">
    <property type="entry name" value="Phosphoribosylformylglycinamidine cyclo-ligase"/>
    <property type="match status" value="1"/>
</dbReference>
<dbReference type="FunFam" id="3.30.470.20:FF:000018">
    <property type="entry name" value="Trifunctional purine biosynthetic protein adenosine-3"/>
    <property type="match status" value="1"/>
</dbReference>
<dbReference type="FunFam" id="3.90.600.10:FF:000001">
    <property type="entry name" value="Trifunctional purine biosynthetic protein adenosine-3"/>
    <property type="match status" value="1"/>
</dbReference>
<dbReference type="FunFam" id="3.90.650.10:FF:000007">
    <property type="entry name" value="Trifunctional purine biosynthetic protein adenosine-3"/>
    <property type="match status" value="1"/>
</dbReference>
<dbReference type="Gene3D" id="3.40.50.20">
    <property type="match status" value="1"/>
</dbReference>
<dbReference type="Gene3D" id="3.30.1490.20">
    <property type="entry name" value="ATP-grasp fold, A domain"/>
    <property type="match status" value="1"/>
</dbReference>
<dbReference type="Gene3D" id="3.30.470.20">
    <property type="entry name" value="ATP-grasp fold, B domain"/>
    <property type="match status" value="1"/>
</dbReference>
<dbReference type="Gene3D" id="3.90.600.10">
    <property type="entry name" value="Phosphoribosylglycinamide synthetase, C-terminal domain"/>
    <property type="match status" value="1"/>
</dbReference>
<dbReference type="Gene3D" id="3.90.650.10">
    <property type="entry name" value="PurM-like C-terminal domain"/>
    <property type="match status" value="1"/>
</dbReference>
<dbReference type="Gene3D" id="3.30.1330.10">
    <property type="entry name" value="PurM-like, N-terminal domain"/>
    <property type="match status" value="1"/>
</dbReference>
<dbReference type="HAMAP" id="MF_00741">
    <property type="entry name" value="AIRS"/>
    <property type="match status" value="1"/>
</dbReference>
<dbReference type="HAMAP" id="MF_00138">
    <property type="entry name" value="GARS"/>
    <property type="match status" value="1"/>
</dbReference>
<dbReference type="InterPro" id="IPR011761">
    <property type="entry name" value="ATP-grasp"/>
</dbReference>
<dbReference type="InterPro" id="IPR013815">
    <property type="entry name" value="ATP_grasp_subdomain_1"/>
</dbReference>
<dbReference type="InterPro" id="IPR016185">
    <property type="entry name" value="PreATP-grasp_dom_sf"/>
</dbReference>
<dbReference type="InterPro" id="IPR020561">
    <property type="entry name" value="PRibGlycinamid_synth_ATP-grasp"/>
</dbReference>
<dbReference type="InterPro" id="IPR000115">
    <property type="entry name" value="PRibGlycinamide_synth"/>
</dbReference>
<dbReference type="InterPro" id="IPR020560">
    <property type="entry name" value="PRibGlycinamide_synth_C-dom"/>
</dbReference>
<dbReference type="InterPro" id="IPR037123">
    <property type="entry name" value="PRibGlycinamide_synth_C_sf"/>
</dbReference>
<dbReference type="InterPro" id="IPR020559">
    <property type="entry name" value="PRibGlycinamide_synth_CS"/>
</dbReference>
<dbReference type="InterPro" id="IPR020562">
    <property type="entry name" value="PRibGlycinamide_synth_N"/>
</dbReference>
<dbReference type="InterPro" id="IPR010918">
    <property type="entry name" value="PurM-like_C_dom"/>
</dbReference>
<dbReference type="InterPro" id="IPR036676">
    <property type="entry name" value="PurM-like_C_sf"/>
</dbReference>
<dbReference type="InterPro" id="IPR016188">
    <property type="entry name" value="PurM-like_N"/>
</dbReference>
<dbReference type="InterPro" id="IPR036921">
    <property type="entry name" value="PurM-like_N_sf"/>
</dbReference>
<dbReference type="InterPro" id="IPR004733">
    <property type="entry name" value="PurM_cligase"/>
</dbReference>
<dbReference type="InterPro" id="IPR011054">
    <property type="entry name" value="Rudment_hybrid_motif"/>
</dbReference>
<dbReference type="NCBIfam" id="TIGR00877">
    <property type="entry name" value="purD"/>
    <property type="match status" value="1"/>
</dbReference>
<dbReference type="NCBIfam" id="TIGR00878">
    <property type="entry name" value="purM"/>
    <property type="match status" value="1"/>
</dbReference>
<dbReference type="PANTHER" id="PTHR10520:SF12">
    <property type="entry name" value="TRIFUNCTIONAL PURINE BIOSYNTHETIC PROTEIN ADENOSINE-3"/>
    <property type="match status" value="1"/>
</dbReference>
<dbReference type="PANTHER" id="PTHR10520">
    <property type="entry name" value="TRIFUNCTIONAL PURINE BIOSYNTHETIC PROTEIN ADENOSINE-3-RELATED"/>
    <property type="match status" value="1"/>
</dbReference>
<dbReference type="Pfam" id="PF00586">
    <property type="entry name" value="AIRS"/>
    <property type="match status" value="1"/>
</dbReference>
<dbReference type="Pfam" id="PF02769">
    <property type="entry name" value="AIRS_C"/>
    <property type="match status" value="1"/>
</dbReference>
<dbReference type="Pfam" id="PF01071">
    <property type="entry name" value="GARS_A"/>
    <property type="match status" value="1"/>
</dbReference>
<dbReference type="Pfam" id="PF02843">
    <property type="entry name" value="GARS_C"/>
    <property type="match status" value="1"/>
</dbReference>
<dbReference type="Pfam" id="PF02844">
    <property type="entry name" value="GARS_N"/>
    <property type="match status" value="1"/>
</dbReference>
<dbReference type="SMART" id="SM01209">
    <property type="entry name" value="GARS_A"/>
    <property type="match status" value="1"/>
</dbReference>
<dbReference type="SMART" id="SM01210">
    <property type="entry name" value="GARS_C"/>
    <property type="match status" value="1"/>
</dbReference>
<dbReference type="SUPFAM" id="SSF56059">
    <property type="entry name" value="Glutathione synthetase ATP-binding domain-like"/>
    <property type="match status" value="1"/>
</dbReference>
<dbReference type="SUPFAM" id="SSF52440">
    <property type="entry name" value="PreATP-grasp domain"/>
    <property type="match status" value="1"/>
</dbReference>
<dbReference type="SUPFAM" id="SSF56042">
    <property type="entry name" value="PurM C-terminal domain-like"/>
    <property type="match status" value="1"/>
</dbReference>
<dbReference type="SUPFAM" id="SSF55326">
    <property type="entry name" value="PurM N-terminal domain-like"/>
    <property type="match status" value="1"/>
</dbReference>
<dbReference type="SUPFAM" id="SSF51246">
    <property type="entry name" value="Rudiment single hybrid motif"/>
    <property type="match status" value="1"/>
</dbReference>
<dbReference type="PROSITE" id="PS50975">
    <property type="entry name" value="ATP_GRASP"/>
    <property type="match status" value="1"/>
</dbReference>
<dbReference type="PROSITE" id="PS00184">
    <property type="entry name" value="GARS"/>
    <property type="match status" value="1"/>
</dbReference>
<sequence length="788" mass="85231">MEPIIALLIGNGGREHTIAWKLCESPLISKVYVAPGNGGTASNGAESKMENVNIGVCDFEQLVKFALDKDVNLVIPGPELPLVEGIEGHFRRVGIPCFGPSALAARMEGSKVFSKDFMHRNNIPTAVYKSFSNYDHAKSFLDTCTFDVVIKADGLAAGKGVIIPKTKKEAFEALESIMLNEEFGSAGKNVVIEELLEGEELSILTFSDGYTCRSLPPAQDHKRAFDGDKGPNTGGMGCYAPTPVASPKLLETVQSTIIQPTIDGMRHEGYPLVGILFTGLMLTPSGPRVLEYNVRFGDPETQAVLPLLESDLAEIILACVNHRLDAIDIVISRKFSCAVVCVAGGYPGPYNKGDIITFDALKDKNTRIFHAGTSIRDGNVVTNGGRVLAVEATGDSVEAAVRLAYEGVKTVHFDKMFYRKDIAHHALNPKRKTREILTYENSGVSVDNGNEFVQRIKDLVKSTRRPGADADIGGFGGIFDLKQAGWNDPLLVSATDGVGSKLLIALSLNKHDTVGIDLVAMNVNDLVVQGAEPLIFLDYFATGSLDLKVSTSFVEGVVKGCKQAGCALVGGETSEMPGLYHDGHYDANGTSVGAVSRDDILPKPESFSKGDILLGLASDGVHSNGYSLVRKIVEYSDLEYTSVCPWDKNVRLGDSLLIPTRIYVKPLLHVIRKNIVKGMAHITGGGLVENVPRMLPSHLNAIIDVDTWEVPEVFKWLKDAGNVPISDMARTFNMGIGMVVAVASEDAEETMKELTSVGETVYRIGQLVDKESSSERCHLVNLNKWETF</sequence>
<gene>
    <name evidence="5" type="primary">ade1</name>
    <name evidence="8" type="ORF">SPBC405.01</name>
    <name type="ORF">SPBC4C3.02c</name>
</gene>
<name>PUR2_SCHPO</name>
<proteinExistence type="evidence at protein level"/>
<reference key="1">
    <citation type="journal article" date="1987" name="Curr. Genet.">
        <title>Sequence of the bifunctional ade1 gene in the purine biosynthetic pathway of the fission yeast Schizosaccharomyces pombe.</title>
        <authorList>
            <person name="McKenzie R."/>
            <person name="Schuchert P."/>
            <person name="Kilbey B."/>
        </authorList>
    </citation>
    <scope>NUCLEOTIDE SEQUENCE [GENOMIC DNA]</scope>
    <source>
        <strain>972 / ATCC 24843</strain>
    </source>
</reference>
<reference key="2">
    <citation type="journal article" date="2002" name="Nature">
        <title>The genome sequence of Schizosaccharomyces pombe.</title>
        <authorList>
            <person name="Wood V."/>
            <person name="Gwilliam R."/>
            <person name="Rajandream M.A."/>
            <person name="Lyne M.H."/>
            <person name="Lyne R."/>
            <person name="Stewart A."/>
            <person name="Sgouros J.G."/>
            <person name="Peat N."/>
            <person name="Hayles J."/>
            <person name="Baker S.G."/>
            <person name="Basham D."/>
            <person name="Bowman S."/>
            <person name="Brooks K."/>
            <person name="Brown D."/>
            <person name="Brown S."/>
            <person name="Chillingworth T."/>
            <person name="Churcher C.M."/>
            <person name="Collins M."/>
            <person name="Connor R."/>
            <person name="Cronin A."/>
            <person name="Davis P."/>
            <person name="Feltwell T."/>
            <person name="Fraser A."/>
            <person name="Gentles S."/>
            <person name="Goble A."/>
            <person name="Hamlin N."/>
            <person name="Harris D.E."/>
            <person name="Hidalgo J."/>
            <person name="Hodgson G."/>
            <person name="Holroyd S."/>
            <person name="Hornsby T."/>
            <person name="Howarth S."/>
            <person name="Huckle E.J."/>
            <person name="Hunt S."/>
            <person name="Jagels K."/>
            <person name="James K.D."/>
            <person name="Jones L."/>
            <person name="Jones M."/>
            <person name="Leather S."/>
            <person name="McDonald S."/>
            <person name="McLean J."/>
            <person name="Mooney P."/>
            <person name="Moule S."/>
            <person name="Mungall K.L."/>
            <person name="Murphy L.D."/>
            <person name="Niblett D."/>
            <person name="Odell C."/>
            <person name="Oliver K."/>
            <person name="O'Neil S."/>
            <person name="Pearson D."/>
            <person name="Quail M.A."/>
            <person name="Rabbinowitsch E."/>
            <person name="Rutherford K.M."/>
            <person name="Rutter S."/>
            <person name="Saunders D."/>
            <person name="Seeger K."/>
            <person name="Sharp S."/>
            <person name="Skelton J."/>
            <person name="Simmonds M.N."/>
            <person name="Squares R."/>
            <person name="Squares S."/>
            <person name="Stevens K."/>
            <person name="Taylor K."/>
            <person name="Taylor R.G."/>
            <person name="Tivey A."/>
            <person name="Walsh S.V."/>
            <person name="Warren T."/>
            <person name="Whitehead S."/>
            <person name="Woodward J.R."/>
            <person name="Volckaert G."/>
            <person name="Aert R."/>
            <person name="Robben J."/>
            <person name="Grymonprez B."/>
            <person name="Weltjens I."/>
            <person name="Vanstreels E."/>
            <person name="Rieger M."/>
            <person name="Schaefer M."/>
            <person name="Mueller-Auer S."/>
            <person name="Gabel C."/>
            <person name="Fuchs M."/>
            <person name="Duesterhoeft A."/>
            <person name="Fritzc C."/>
            <person name="Holzer E."/>
            <person name="Moestl D."/>
            <person name="Hilbert H."/>
            <person name="Borzym K."/>
            <person name="Langer I."/>
            <person name="Beck A."/>
            <person name="Lehrach H."/>
            <person name="Reinhardt R."/>
            <person name="Pohl T.M."/>
            <person name="Eger P."/>
            <person name="Zimmermann W."/>
            <person name="Wedler H."/>
            <person name="Wambutt R."/>
            <person name="Purnelle B."/>
            <person name="Goffeau A."/>
            <person name="Cadieu E."/>
            <person name="Dreano S."/>
            <person name="Gloux S."/>
            <person name="Lelaure V."/>
            <person name="Mottier S."/>
            <person name="Galibert F."/>
            <person name="Aves S.J."/>
            <person name="Xiang Z."/>
            <person name="Hunt C."/>
            <person name="Moore K."/>
            <person name="Hurst S.M."/>
            <person name="Lucas M."/>
            <person name="Rochet M."/>
            <person name="Gaillardin C."/>
            <person name="Tallada V.A."/>
            <person name="Garzon A."/>
            <person name="Thode G."/>
            <person name="Daga R.R."/>
            <person name="Cruzado L."/>
            <person name="Jimenez J."/>
            <person name="Sanchez M."/>
            <person name="del Rey F."/>
            <person name="Benito J."/>
            <person name="Dominguez A."/>
            <person name="Revuelta J.L."/>
            <person name="Moreno S."/>
            <person name="Armstrong J."/>
            <person name="Forsburg S.L."/>
            <person name="Cerutti L."/>
            <person name="Lowe T."/>
            <person name="McCombie W.R."/>
            <person name="Paulsen I."/>
            <person name="Potashkin J."/>
            <person name="Shpakovski G.V."/>
            <person name="Ussery D."/>
            <person name="Barrell B.G."/>
            <person name="Nurse P."/>
        </authorList>
    </citation>
    <scope>NUCLEOTIDE SEQUENCE [LARGE SCALE GENOMIC DNA]</scope>
    <source>
        <strain>972 / ATCC 24843</strain>
    </source>
</reference>
<reference key="3">
    <citation type="journal article" date="1976" name="Mol. Gen. Genet.">
        <title>The product of the ade1: gene in Schizosaccharomyces pombe: a bifunctional enzyme catalysing two distinct steps in purine biosynthesis.</title>
        <authorList>
            <person name="Fluri R."/>
            <person name="Coddington A."/>
            <person name="Flury U."/>
        </authorList>
    </citation>
    <scope>FUNCTION</scope>
    <scope>CATALYTIC ACTIVITY</scope>
</reference>
<reference key="4">
    <citation type="journal article" date="2006" name="Nat. Biotechnol.">
        <title>ORFeome cloning and global analysis of protein localization in the fission yeast Schizosaccharomyces pombe.</title>
        <authorList>
            <person name="Matsuyama A."/>
            <person name="Arai R."/>
            <person name="Yashiroda Y."/>
            <person name="Shirai A."/>
            <person name="Kamata A."/>
            <person name="Sekido S."/>
            <person name="Kobayashi Y."/>
            <person name="Hashimoto A."/>
            <person name="Hamamoto M."/>
            <person name="Hiraoka Y."/>
            <person name="Horinouchi S."/>
            <person name="Yoshida M."/>
        </authorList>
    </citation>
    <scope>SUBCELLULAR LOCATION [LARGE SCALE ANALYSIS]</scope>
</reference>
<organism>
    <name type="scientific">Schizosaccharomyces pombe (strain 972 / ATCC 24843)</name>
    <name type="common">Fission yeast</name>
    <dbReference type="NCBI Taxonomy" id="284812"/>
    <lineage>
        <taxon>Eukaryota</taxon>
        <taxon>Fungi</taxon>
        <taxon>Dikarya</taxon>
        <taxon>Ascomycota</taxon>
        <taxon>Taphrinomycotina</taxon>
        <taxon>Schizosaccharomycetes</taxon>
        <taxon>Schizosaccharomycetales</taxon>
        <taxon>Schizosaccharomycetaceae</taxon>
        <taxon>Schizosaccharomyces</taxon>
    </lineage>
</organism>
<feature type="chain" id="PRO_0000454642" description="Bifunctional purine biosynthetic protein ADE1">
    <location>
        <begin position="1"/>
        <end position="788"/>
    </location>
</feature>
<feature type="domain" description="ATP-grasp" evidence="2">
    <location>
        <begin position="115"/>
        <end position="321"/>
    </location>
</feature>
<feature type="region of interest" description="GARS" evidence="1">
    <location>
        <begin position="1"/>
        <end position="430"/>
    </location>
</feature>
<feature type="region of interest" description="AIRS" evidence="1">
    <location>
        <begin position="437"/>
        <end position="769"/>
    </location>
</feature>
<feature type="binding site" evidence="2">
    <location>
        <begin position="141"/>
        <end position="202"/>
    </location>
    <ligand>
        <name>ATP</name>
        <dbReference type="ChEBI" id="CHEBI:30616"/>
    </ligand>
</feature>
<feature type="binding site" evidence="2">
    <location>
        <position position="291"/>
    </location>
    <ligand>
        <name>Mg(2+)</name>
        <dbReference type="ChEBI" id="CHEBI:18420"/>
    </ligand>
</feature>
<feature type="binding site" evidence="2">
    <location>
        <position position="293"/>
    </location>
    <ligand>
        <name>Mg(2+)</name>
        <dbReference type="ChEBI" id="CHEBI:18420"/>
    </ligand>
</feature>
<evidence type="ECO:0000255" key="1"/>
<evidence type="ECO:0000255" key="2">
    <source>
        <dbReference type="PROSITE-ProRule" id="PRU00409"/>
    </source>
</evidence>
<evidence type="ECO:0000269" key="3">
    <source>
    </source>
</evidence>
<evidence type="ECO:0000269" key="4">
    <source>
    </source>
</evidence>
<evidence type="ECO:0000303" key="5">
    <source>
    </source>
</evidence>
<evidence type="ECO:0000303" key="6">
    <source>
    </source>
</evidence>
<evidence type="ECO:0000305" key="7"/>
<evidence type="ECO:0000312" key="8">
    <source>
        <dbReference type="PomBase" id="SPBC405.01"/>
    </source>
</evidence>
<keyword id="KW-0067">ATP-binding</keyword>
<keyword id="KW-0963">Cytoplasm</keyword>
<keyword id="KW-0436">Ligase</keyword>
<keyword id="KW-0460">Magnesium</keyword>
<keyword id="KW-0464">Manganese</keyword>
<keyword id="KW-0479">Metal-binding</keyword>
<keyword id="KW-0511">Multifunctional enzyme</keyword>
<keyword id="KW-0547">Nucleotide-binding</keyword>
<keyword id="KW-0658">Purine biosynthesis</keyword>
<keyword id="KW-1185">Reference proteome</keyword>